<evidence type="ECO:0000250" key="1"/>
<evidence type="ECO:0000305" key="2"/>
<reference key="1">
    <citation type="journal article" date="1996" name="DNA Res.">
        <title>Sequence analysis of the genome of the unicellular cyanobacterium Synechocystis sp. strain PCC6803. II. Sequence determination of the entire genome and assignment of potential protein-coding regions.</title>
        <authorList>
            <person name="Kaneko T."/>
            <person name="Sato S."/>
            <person name="Kotani H."/>
            <person name="Tanaka A."/>
            <person name="Asamizu E."/>
            <person name="Nakamura Y."/>
            <person name="Miyajima N."/>
            <person name="Hirosawa M."/>
            <person name="Sugiura M."/>
            <person name="Sasamoto S."/>
            <person name="Kimura T."/>
            <person name="Hosouchi T."/>
            <person name="Matsuno A."/>
            <person name="Muraki A."/>
            <person name="Nakazaki N."/>
            <person name="Naruo K."/>
            <person name="Okumura S."/>
            <person name="Shimpo S."/>
            <person name="Takeuchi C."/>
            <person name="Wada T."/>
            <person name="Watanabe A."/>
            <person name="Yamada M."/>
            <person name="Yasuda M."/>
            <person name="Tabata S."/>
        </authorList>
    </citation>
    <scope>NUCLEOTIDE SEQUENCE [LARGE SCALE GENOMIC DNA]</scope>
    <source>
        <strain>ATCC 27184 / PCC 6803 / Kazusa</strain>
    </source>
</reference>
<name>SUHB_SYNY3</name>
<feature type="chain" id="PRO_0000142573" description="Inositol-1-monophosphatase">
    <location>
        <begin position="1"/>
        <end position="287"/>
    </location>
</feature>
<feature type="binding site" evidence="1">
    <location>
        <position position="79"/>
    </location>
    <ligand>
        <name>Mg(2+)</name>
        <dbReference type="ChEBI" id="CHEBI:18420"/>
        <label>1</label>
    </ligand>
</feature>
<feature type="binding site" evidence="1">
    <location>
        <position position="79"/>
    </location>
    <ligand>
        <name>substrate</name>
    </ligand>
</feature>
<feature type="binding site" evidence="1">
    <location>
        <position position="96"/>
    </location>
    <ligand>
        <name>Mg(2+)</name>
        <dbReference type="ChEBI" id="CHEBI:18420"/>
        <label>1</label>
    </ligand>
</feature>
<feature type="binding site" evidence="1">
    <location>
        <position position="96"/>
    </location>
    <ligand>
        <name>Mg(2+)</name>
        <dbReference type="ChEBI" id="CHEBI:18420"/>
        <label>2</label>
    </ligand>
</feature>
<feature type="binding site" evidence="1">
    <location>
        <begin position="98"/>
        <end position="101"/>
    </location>
    <ligand>
        <name>substrate</name>
    </ligand>
</feature>
<feature type="binding site" evidence="1">
    <location>
        <position position="98"/>
    </location>
    <ligand>
        <name>Mg(2+)</name>
        <dbReference type="ChEBI" id="CHEBI:18420"/>
        <label>1</label>
    </ligand>
</feature>
<feature type="binding site" evidence="1">
    <location>
        <position position="99"/>
    </location>
    <ligand>
        <name>Mg(2+)</name>
        <dbReference type="ChEBI" id="CHEBI:18420"/>
        <label>2</label>
    </ligand>
</feature>
<feature type="binding site" evidence="1">
    <location>
        <position position="195"/>
    </location>
    <ligand>
        <name>substrate</name>
    </ligand>
</feature>
<feature type="binding site" evidence="1">
    <location>
        <position position="224"/>
    </location>
    <ligand>
        <name>Mg(2+)</name>
        <dbReference type="ChEBI" id="CHEBI:18420"/>
        <label>2</label>
    </ligand>
</feature>
<feature type="binding site" evidence="1">
    <location>
        <position position="224"/>
    </location>
    <ligand>
        <name>substrate</name>
    </ligand>
</feature>
<proteinExistence type="inferred from homology"/>
<protein>
    <recommendedName>
        <fullName>Inositol-1-monophosphatase</fullName>
        <shortName>I-1-Pase</shortName>
        <shortName>IMPase</shortName>
        <shortName>Inositol-1-phosphatase</shortName>
        <ecNumber>3.1.3.25</ecNumber>
    </recommendedName>
</protein>
<sequence>MTSAQKPVFSPSDLQTWLEIATEAVLAAGAEIFSLWGKVQQIQEKGRAGDLVTEADRQAEAIILEIIKRRCPDHAILAEESGQLGQVDNPFCWAIDPLDGTTNFAHSYPVSCVSIGLLIQDIPTVGVVYNPFRQELFRAATSLGATLNRRPIQVSTTASLDKSLLVTGFAYDRVKTLDNNYPEFCYLTHLTQGVRRSGSAAIDLIDVACGRLDGYWERGINPWDMAAGIVIVREAGGIVSAYDCSPLDLSTGRILATNGKIHQELSQALAATPQWFQQYAAARAQKI</sequence>
<gene>
    <name type="primary">suhB</name>
    <name type="ordered locus">sll1383</name>
</gene>
<comment type="catalytic activity">
    <reaction>
        <text>a myo-inositol phosphate + H2O = myo-inositol + phosphate</text>
        <dbReference type="Rhea" id="RHEA:24056"/>
        <dbReference type="ChEBI" id="CHEBI:15377"/>
        <dbReference type="ChEBI" id="CHEBI:17268"/>
        <dbReference type="ChEBI" id="CHEBI:43474"/>
        <dbReference type="ChEBI" id="CHEBI:84139"/>
        <dbReference type="EC" id="3.1.3.25"/>
    </reaction>
</comment>
<comment type="cofactor">
    <cofactor evidence="1">
        <name>Mg(2+)</name>
        <dbReference type="ChEBI" id="CHEBI:18420"/>
    </cofactor>
</comment>
<comment type="similarity">
    <text evidence="2">Belongs to the inositol monophosphatase superfamily.</text>
</comment>
<accession>P74158</accession>
<organism>
    <name type="scientific">Synechocystis sp. (strain ATCC 27184 / PCC 6803 / Kazusa)</name>
    <dbReference type="NCBI Taxonomy" id="1111708"/>
    <lineage>
        <taxon>Bacteria</taxon>
        <taxon>Bacillati</taxon>
        <taxon>Cyanobacteriota</taxon>
        <taxon>Cyanophyceae</taxon>
        <taxon>Synechococcales</taxon>
        <taxon>Merismopediaceae</taxon>
        <taxon>Synechocystis</taxon>
    </lineage>
</organism>
<dbReference type="EC" id="3.1.3.25"/>
<dbReference type="EMBL" id="BA000022">
    <property type="protein sequence ID" value="BAA18247.1"/>
    <property type="molecule type" value="Genomic_DNA"/>
</dbReference>
<dbReference type="PIR" id="S75686">
    <property type="entry name" value="S75686"/>
</dbReference>
<dbReference type="SMR" id="P74158"/>
<dbReference type="FunCoup" id="P74158">
    <property type="interactions" value="352"/>
</dbReference>
<dbReference type="IntAct" id="P74158">
    <property type="interactions" value="5"/>
</dbReference>
<dbReference type="STRING" id="1148.gene:10499121"/>
<dbReference type="PaxDb" id="1148-1653332"/>
<dbReference type="EnsemblBacteria" id="BAA18247">
    <property type="protein sequence ID" value="BAA18247"/>
    <property type="gene ID" value="BAA18247"/>
</dbReference>
<dbReference type="KEGG" id="syn:sll1383"/>
<dbReference type="eggNOG" id="COG0483">
    <property type="taxonomic scope" value="Bacteria"/>
</dbReference>
<dbReference type="InParanoid" id="P74158"/>
<dbReference type="PhylomeDB" id="P74158"/>
<dbReference type="Proteomes" id="UP000001425">
    <property type="component" value="Chromosome"/>
</dbReference>
<dbReference type="GO" id="GO:0008934">
    <property type="term" value="F:inositol monophosphate 1-phosphatase activity"/>
    <property type="evidence" value="ECO:0000318"/>
    <property type="project" value="GO_Central"/>
</dbReference>
<dbReference type="GO" id="GO:0046872">
    <property type="term" value="F:metal ion binding"/>
    <property type="evidence" value="ECO:0007669"/>
    <property type="project" value="UniProtKB-KW"/>
</dbReference>
<dbReference type="GO" id="GO:0006020">
    <property type="term" value="P:inositol metabolic process"/>
    <property type="evidence" value="ECO:0000318"/>
    <property type="project" value="GO_Central"/>
</dbReference>
<dbReference type="GO" id="GO:0046854">
    <property type="term" value="P:phosphatidylinositol phosphate biosynthetic process"/>
    <property type="evidence" value="ECO:0007669"/>
    <property type="project" value="InterPro"/>
</dbReference>
<dbReference type="GO" id="GO:0007165">
    <property type="term" value="P:signal transduction"/>
    <property type="evidence" value="ECO:0000318"/>
    <property type="project" value="GO_Central"/>
</dbReference>
<dbReference type="CDD" id="cd01639">
    <property type="entry name" value="IMPase"/>
    <property type="match status" value="1"/>
</dbReference>
<dbReference type="FunFam" id="3.30.540.10:FF:000003">
    <property type="entry name" value="Inositol-1-monophosphatase"/>
    <property type="match status" value="1"/>
</dbReference>
<dbReference type="FunFam" id="3.40.190.80:FF:000002">
    <property type="entry name" value="Inositol-1-monophosphatase"/>
    <property type="match status" value="1"/>
</dbReference>
<dbReference type="Gene3D" id="3.40.190.80">
    <property type="match status" value="1"/>
</dbReference>
<dbReference type="Gene3D" id="3.30.540.10">
    <property type="entry name" value="Fructose-1,6-Bisphosphatase, subunit A, domain 1"/>
    <property type="match status" value="1"/>
</dbReference>
<dbReference type="InterPro" id="IPR033942">
    <property type="entry name" value="IMPase"/>
</dbReference>
<dbReference type="InterPro" id="IPR020583">
    <property type="entry name" value="Inositol_monoP_metal-BS"/>
</dbReference>
<dbReference type="InterPro" id="IPR000760">
    <property type="entry name" value="Inositol_monophosphatase-like"/>
</dbReference>
<dbReference type="InterPro" id="IPR020550">
    <property type="entry name" value="Inositol_monophosphatase_CS"/>
</dbReference>
<dbReference type="InterPro" id="IPR022337">
    <property type="entry name" value="Inositol_monophosphatase_SuhB"/>
</dbReference>
<dbReference type="PANTHER" id="PTHR20854">
    <property type="entry name" value="INOSITOL MONOPHOSPHATASE"/>
    <property type="match status" value="1"/>
</dbReference>
<dbReference type="PANTHER" id="PTHR20854:SF4">
    <property type="entry name" value="INOSITOL-1-MONOPHOSPHATASE-RELATED"/>
    <property type="match status" value="1"/>
</dbReference>
<dbReference type="Pfam" id="PF00459">
    <property type="entry name" value="Inositol_P"/>
    <property type="match status" value="1"/>
</dbReference>
<dbReference type="PRINTS" id="PR00377">
    <property type="entry name" value="IMPHPHTASES"/>
</dbReference>
<dbReference type="PRINTS" id="PR01959">
    <property type="entry name" value="SBIMPHPHTASE"/>
</dbReference>
<dbReference type="SUPFAM" id="SSF56655">
    <property type="entry name" value="Carbohydrate phosphatase"/>
    <property type="match status" value="1"/>
</dbReference>
<dbReference type="PROSITE" id="PS00629">
    <property type="entry name" value="IMP_1"/>
    <property type="match status" value="1"/>
</dbReference>
<dbReference type="PROSITE" id="PS00630">
    <property type="entry name" value="IMP_2"/>
    <property type="match status" value="1"/>
</dbReference>
<keyword id="KW-0378">Hydrolase</keyword>
<keyword id="KW-0460">Magnesium</keyword>
<keyword id="KW-0479">Metal-binding</keyword>
<keyword id="KW-1185">Reference proteome</keyword>